<proteinExistence type="evidence at protein level"/>
<accession>P49804</accession>
<reference key="1">
    <citation type="journal article" date="1997" name="Nature">
        <title>RGS8 accelerates G-protein-mediated modulation of K+ currents.</title>
        <authorList>
            <person name="Saitoh O."/>
            <person name="Kubo Y."/>
            <person name="Miyatani Y."/>
            <person name="Asano T."/>
            <person name="Nakata H."/>
        </authorList>
    </citation>
    <scope>NUCLEOTIDE SEQUENCE [MRNA]</scope>
    <scope>FUNCTION</scope>
    <scope>INTERACTION WITH GNAO1 AND GNAI3</scope>
    <scope>SUBCELLULAR LOCATION</scope>
    <scope>TISSUE SPECIFICITY</scope>
    <scope>DEVELOPMENTAL STAGE</scope>
    <source>
        <tissue>Hippocampus</tissue>
    </source>
</reference>
<reference key="2">
    <citation type="journal article" date="2004" name="Genome Res.">
        <title>The status, quality, and expansion of the NIH full-length cDNA project: the Mammalian Gene Collection (MGC).</title>
        <authorList>
            <consortium name="The MGC Project Team"/>
        </authorList>
    </citation>
    <scope>NUCLEOTIDE SEQUENCE [LARGE SCALE MRNA]</scope>
    <source>
        <tissue>Brain</tissue>
    </source>
</reference>
<reference key="3">
    <citation type="journal article" date="1996" name="Cell">
        <title>EGL-10 regulates G protein signaling in the C. elegans nervous system and shares a conserved domain with many mammalian proteins.</title>
        <authorList>
            <person name="Koelle M.R."/>
            <person name="Horvitz H.R."/>
        </authorList>
    </citation>
    <scope>NUCLEOTIDE SEQUENCE [MRNA] OF 87-153</scope>
    <source>
        <tissue>Brain</tissue>
    </source>
</reference>
<reference key="4">
    <citation type="journal article" date="2003" name="Cerebellum">
        <title>Distribution of regulator of G protein signaling 8 (RGS8) protein in the cerebellum.</title>
        <authorList>
            <person name="Saitoh O."/>
            <person name="Masuho I."/>
            <person name="Itoh M."/>
            <person name="Abe H."/>
            <person name="Komori K."/>
            <person name="Odagiri M."/>
        </authorList>
    </citation>
    <scope>SUBCELLULAR LOCATION</scope>
    <scope>TISSUE SPECIFICITY</scope>
</reference>
<reference key="5">
    <citation type="journal article" date="2009" name="NeuroReport">
        <title>Effects of spinophilin on the function of RGS8 regulating signals from M2 and M3-mAChRs.</title>
        <authorList>
            <person name="Kurogi M."/>
            <person name="Nagatomo K."/>
            <person name="Kubo Y."/>
            <person name="Saitoh O."/>
        </authorList>
    </citation>
    <scope>FUNCTION</scope>
</reference>
<reference key="6">
    <citation type="journal article" date="2012" name="Nat. Commun.">
        <title>Quantitative maps of protein phosphorylation sites across 14 different rat organs and tissues.</title>
        <authorList>
            <person name="Lundby A."/>
            <person name="Secher A."/>
            <person name="Lage K."/>
            <person name="Nordsborg N.B."/>
            <person name="Dmytriyev A."/>
            <person name="Lundby C."/>
            <person name="Olsen J.V."/>
        </authorList>
    </citation>
    <scope>PHOSPHORYLATION [LARGE SCALE ANALYSIS] AT SER-26</scope>
    <scope>IDENTIFICATION BY MASS SPECTROMETRY [LARGE SCALE ANALYSIS]</scope>
</reference>
<organism>
    <name type="scientific">Rattus norvegicus</name>
    <name type="common">Rat</name>
    <dbReference type="NCBI Taxonomy" id="10116"/>
    <lineage>
        <taxon>Eukaryota</taxon>
        <taxon>Metazoa</taxon>
        <taxon>Chordata</taxon>
        <taxon>Craniata</taxon>
        <taxon>Vertebrata</taxon>
        <taxon>Euteleostomi</taxon>
        <taxon>Mammalia</taxon>
        <taxon>Eutheria</taxon>
        <taxon>Euarchontoglires</taxon>
        <taxon>Glires</taxon>
        <taxon>Rodentia</taxon>
        <taxon>Myomorpha</taxon>
        <taxon>Muroidea</taxon>
        <taxon>Muridae</taxon>
        <taxon>Murinae</taxon>
        <taxon>Rattus</taxon>
    </lineage>
</organism>
<gene>
    <name type="primary">Rgs8</name>
</gene>
<name>RGS8_RAT</name>
<sequence>MAALLMPRRNKGMRTRLGCLSHKSDSCSDFTAILPDKPNRALKRLSTEEATRWADSFDVLLSHKYGVAAFRAFLKTEFSEENLEFWLACEEFKKTRSTAKLVTKAHRIFEEFVDVQAPREVNIDFQTREATRKNMQEPSLTCFDQAQGKVHSLMEKDSYPRFLRSKMYLDLLSQSQRRLS</sequence>
<dbReference type="EMBL" id="AB006013">
    <property type="protein sequence ID" value="BAA23680.1"/>
    <property type="molecule type" value="mRNA"/>
</dbReference>
<dbReference type="EMBL" id="BC089064">
    <property type="protein sequence ID" value="AAH89064.1"/>
    <property type="molecule type" value="mRNA"/>
</dbReference>
<dbReference type="EMBL" id="U32432">
    <property type="protein sequence ID" value="AAC52369.1"/>
    <property type="molecule type" value="mRNA"/>
</dbReference>
<dbReference type="RefSeq" id="NP_062217.1">
    <property type="nucleotide sequence ID" value="NM_019344.4"/>
</dbReference>
<dbReference type="RefSeq" id="XP_006250078.1">
    <property type="nucleotide sequence ID" value="XM_006250016.5"/>
</dbReference>
<dbReference type="RefSeq" id="XP_038946961.1">
    <property type="nucleotide sequence ID" value="XM_039091033.2"/>
</dbReference>
<dbReference type="RefSeq" id="XP_038946963.1">
    <property type="nucleotide sequence ID" value="XM_039091035.2"/>
</dbReference>
<dbReference type="RefSeq" id="XP_038946964.1">
    <property type="nucleotide sequence ID" value="XM_039091036.2"/>
</dbReference>
<dbReference type="RefSeq" id="XP_038946965.1">
    <property type="nucleotide sequence ID" value="XM_039091037.2"/>
</dbReference>
<dbReference type="SMR" id="P49804"/>
<dbReference type="FunCoup" id="P49804">
    <property type="interactions" value="283"/>
</dbReference>
<dbReference type="STRING" id="10116.ENSRNOP00000073985"/>
<dbReference type="iPTMnet" id="P49804"/>
<dbReference type="PhosphoSitePlus" id="P49804"/>
<dbReference type="SwissPalm" id="P49804"/>
<dbReference type="PaxDb" id="10116-ENSRNOP00000003239"/>
<dbReference type="Ensembl" id="ENSRNOT00000003239.7">
    <property type="protein sequence ID" value="ENSRNOP00000003239.4"/>
    <property type="gene ID" value="ENSRNOG00000002369.7"/>
</dbReference>
<dbReference type="GeneID" id="54297"/>
<dbReference type="KEGG" id="rno:54297"/>
<dbReference type="UCSC" id="RGD:3571">
    <property type="organism name" value="rat"/>
</dbReference>
<dbReference type="AGR" id="RGD:3571"/>
<dbReference type="CTD" id="85397"/>
<dbReference type="RGD" id="3571">
    <property type="gene designation" value="Rgs8"/>
</dbReference>
<dbReference type="eggNOG" id="KOG3589">
    <property type="taxonomic scope" value="Eukaryota"/>
</dbReference>
<dbReference type="GeneTree" id="ENSGT00940000154304"/>
<dbReference type="HOGENOM" id="CLU_059863_3_1_1"/>
<dbReference type="InParanoid" id="P49804"/>
<dbReference type="PhylomeDB" id="P49804"/>
<dbReference type="TreeFam" id="TF315837"/>
<dbReference type="Reactome" id="R-RNO-418594">
    <property type="pathway name" value="G alpha (i) signalling events"/>
</dbReference>
<dbReference type="PRO" id="PR:P49804"/>
<dbReference type="Proteomes" id="UP000002494">
    <property type="component" value="Chromosome 13"/>
</dbReference>
<dbReference type="Bgee" id="ENSRNOG00000002369">
    <property type="expression patterns" value="Expressed in cerebellum and 5 other cell types or tissues"/>
</dbReference>
<dbReference type="ExpressionAtlas" id="P49804">
    <property type="expression patterns" value="baseline and differential"/>
</dbReference>
<dbReference type="GO" id="GO:0009898">
    <property type="term" value="C:cytoplasmic side of plasma membrane"/>
    <property type="evidence" value="ECO:0000314"/>
    <property type="project" value="UniProtKB"/>
</dbReference>
<dbReference type="GO" id="GO:0030425">
    <property type="term" value="C:dendrite"/>
    <property type="evidence" value="ECO:0000314"/>
    <property type="project" value="UniProtKB"/>
</dbReference>
<dbReference type="GO" id="GO:0032809">
    <property type="term" value="C:neuronal cell body membrane"/>
    <property type="evidence" value="ECO:0000314"/>
    <property type="project" value="UniProtKB"/>
</dbReference>
<dbReference type="GO" id="GO:0005634">
    <property type="term" value="C:nucleus"/>
    <property type="evidence" value="ECO:0000314"/>
    <property type="project" value="UniProtKB"/>
</dbReference>
<dbReference type="GO" id="GO:0043204">
    <property type="term" value="C:perikaryon"/>
    <property type="evidence" value="ECO:0007669"/>
    <property type="project" value="UniProtKB-SubCell"/>
</dbReference>
<dbReference type="GO" id="GO:0045202">
    <property type="term" value="C:synapse"/>
    <property type="evidence" value="ECO:0007669"/>
    <property type="project" value="GOC"/>
</dbReference>
<dbReference type="GO" id="GO:0001965">
    <property type="term" value="F:G-protein alpha-subunit binding"/>
    <property type="evidence" value="ECO:0000353"/>
    <property type="project" value="UniProtKB"/>
</dbReference>
<dbReference type="GO" id="GO:0005096">
    <property type="term" value="F:GTPase activator activity"/>
    <property type="evidence" value="ECO:0000314"/>
    <property type="project" value="UniProtKB"/>
</dbReference>
<dbReference type="GO" id="GO:0007213">
    <property type="term" value="P:G protein-coupled acetylcholine receptor signaling pathway"/>
    <property type="evidence" value="ECO:0000314"/>
    <property type="project" value="UniProtKB"/>
</dbReference>
<dbReference type="GO" id="GO:0009968">
    <property type="term" value="P:negative regulation of signal transduction"/>
    <property type="evidence" value="ECO:0007669"/>
    <property type="project" value="UniProtKB-KW"/>
</dbReference>
<dbReference type="GO" id="GO:0043547">
    <property type="term" value="P:positive regulation of GTPase activity"/>
    <property type="evidence" value="ECO:0000314"/>
    <property type="project" value="UniProtKB"/>
</dbReference>
<dbReference type="GO" id="GO:0060159">
    <property type="term" value="P:regulation of dopamine receptor signaling pathway"/>
    <property type="evidence" value="ECO:0000314"/>
    <property type="project" value="UniProtKB"/>
</dbReference>
<dbReference type="GO" id="GO:0001975">
    <property type="term" value="P:response to amphetamine"/>
    <property type="evidence" value="ECO:0000270"/>
    <property type="project" value="RGD"/>
</dbReference>
<dbReference type="CDD" id="cd08711">
    <property type="entry name" value="RGS_RGS8"/>
    <property type="match status" value="1"/>
</dbReference>
<dbReference type="FunFam" id="1.10.167.10:FF:000001">
    <property type="entry name" value="Putative regulator of g-protein signaling 12"/>
    <property type="match status" value="1"/>
</dbReference>
<dbReference type="FunFam" id="1.10.196.10:FF:000001">
    <property type="entry name" value="Regulator of G-protein signaling 8"/>
    <property type="match status" value="1"/>
</dbReference>
<dbReference type="Gene3D" id="1.10.196.10">
    <property type="match status" value="2"/>
</dbReference>
<dbReference type="Gene3D" id="1.10.167.10">
    <property type="entry name" value="Regulator of G-protein Signalling 4, domain 2"/>
    <property type="match status" value="1"/>
</dbReference>
<dbReference type="InterPro" id="IPR016137">
    <property type="entry name" value="RGS"/>
</dbReference>
<dbReference type="InterPro" id="IPR034949">
    <property type="entry name" value="RGS_RGS8"/>
</dbReference>
<dbReference type="InterPro" id="IPR036305">
    <property type="entry name" value="RGS_sf"/>
</dbReference>
<dbReference type="InterPro" id="IPR024066">
    <property type="entry name" value="RGS_subdom1/3"/>
</dbReference>
<dbReference type="InterPro" id="IPR044926">
    <property type="entry name" value="RGS_subdomain_2"/>
</dbReference>
<dbReference type="PANTHER" id="PTHR10845">
    <property type="entry name" value="REGULATOR OF G PROTEIN SIGNALING"/>
    <property type="match status" value="1"/>
</dbReference>
<dbReference type="PANTHER" id="PTHR10845:SF147">
    <property type="entry name" value="REGULATOR OF G-PROTEIN SIGNALING 8"/>
    <property type="match status" value="1"/>
</dbReference>
<dbReference type="Pfam" id="PF00615">
    <property type="entry name" value="RGS"/>
    <property type="match status" value="1"/>
</dbReference>
<dbReference type="PRINTS" id="PR01301">
    <property type="entry name" value="RGSPROTEIN"/>
</dbReference>
<dbReference type="SMART" id="SM00315">
    <property type="entry name" value="RGS"/>
    <property type="match status" value="1"/>
</dbReference>
<dbReference type="SUPFAM" id="SSF48097">
    <property type="entry name" value="Regulator of G-protein signaling, RGS"/>
    <property type="match status" value="1"/>
</dbReference>
<dbReference type="PROSITE" id="PS50132">
    <property type="entry name" value="RGS"/>
    <property type="match status" value="1"/>
</dbReference>
<feature type="chain" id="PRO_0000204201" description="Regulator of G-protein signaling 8">
    <location>
        <begin position="1"/>
        <end position="180"/>
    </location>
</feature>
<feature type="domain" description="RGS" evidence="1">
    <location>
        <begin position="56"/>
        <end position="171"/>
    </location>
</feature>
<feature type="modified residue" description="Phosphoserine" evidence="6">
    <location>
        <position position="26"/>
    </location>
</feature>
<comment type="function">
    <text evidence="3 4">Regulates G protein-coupled receptor signaling cascades, including signaling via muscarinic acetylcholine receptor CHRM2 and dopamine receptor DRD2. Inhibits signal transduction by increasing the GTPase activity of G protein alpha subunits, thereby driving them into their inactive GDP-bound form. Modulates the activity of potassium channels that are activated in response to DRD2 and CHRM2 signaling.</text>
</comment>
<comment type="subunit">
    <text evidence="4">Interacts with GNAO1 and GNAI3.</text>
</comment>
<comment type="subcellular location">
    <subcellularLocation>
        <location evidence="2">Cell membrane</location>
        <topology evidence="5">Peripheral membrane protein</topology>
        <orientation evidence="5">Cytoplasmic side</orientation>
    </subcellularLocation>
    <subcellularLocation>
        <location evidence="4">Membrane</location>
        <topology evidence="5">Peripheral membrane protein</topology>
        <orientation evidence="5">Cytoplasmic side</orientation>
    </subcellularLocation>
    <subcellularLocation>
        <location evidence="2">Perikaryon</location>
    </subcellularLocation>
    <subcellularLocation>
        <location evidence="2">Cell projection</location>
        <location evidence="2">Dendrite</location>
    </subcellularLocation>
    <subcellularLocation>
        <location evidence="2">Nucleus</location>
    </subcellularLocation>
    <text evidence="2">Detected in Purkinje cell soma and dendrites. Associated with Purkinje cell membranes. Not detected in Purkinje cell nuclei. Detected in the nucleus after heterologous expression. Recruited to the cell membrane in the presence of GNAO1.</text>
</comment>
<comment type="tissue specificity">
    <text evidence="2 4">Expressed at high levels in brain. Very little expression detected in other tissues (PubMed:9394004). Detected in Purkinje cells in the cerebellum (PubMed:12880183).</text>
</comment>
<comment type="developmental stage">
    <text evidence="4">Detected in 13-day old embryos. Expression increases gradually in later embryos and markedly in neonates to adults.</text>
</comment>
<keyword id="KW-1003">Cell membrane</keyword>
<keyword id="KW-0966">Cell projection</keyword>
<keyword id="KW-0472">Membrane</keyword>
<keyword id="KW-0539">Nucleus</keyword>
<keyword id="KW-0597">Phosphoprotein</keyword>
<keyword id="KW-1185">Reference proteome</keyword>
<keyword id="KW-0734">Signal transduction inhibitor</keyword>
<evidence type="ECO:0000255" key="1">
    <source>
        <dbReference type="PROSITE-ProRule" id="PRU00171"/>
    </source>
</evidence>
<evidence type="ECO:0000269" key="2">
    <source>
    </source>
</evidence>
<evidence type="ECO:0000269" key="3">
    <source>
    </source>
</evidence>
<evidence type="ECO:0000269" key="4">
    <source>
    </source>
</evidence>
<evidence type="ECO:0000305" key="5"/>
<evidence type="ECO:0007744" key="6">
    <source>
    </source>
</evidence>
<protein>
    <recommendedName>
        <fullName>Regulator of G-protein signaling 8</fullName>
        <shortName>RGS8</shortName>
    </recommendedName>
</protein>